<dbReference type="EC" id="2.7.7.72" evidence="1"/>
<dbReference type="EMBL" id="CT573326">
    <property type="protein sequence ID" value="CAK13375.1"/>
    <property type="molecule type" value="Genomic_DNA"/>
</dbReference>
<dbReference type="RefSeq" id="WP_011531832.1">
    <property type="nucleotide sequence ID" value="NC_008027.1"/>
</dbReference>
<dbReference type="SMR" id="Q1IG27"/>
<dbReference type="STRING" id="384676.PSEEN0421"/>
<dbReference type="GeneID" id="32803756"/>
<dbReference type="KEGG" id="pen:PSEEN0421"/>
<dbReference type="eggNOG" id="COG0617">
    <property type="taxonomic scope" value="Bacteria"/>
</dbReference>
<dbReference type="HOGENOM" id="CLU_015961_1_1_6"/>
<dbReference type="OrthoDB" id="9805698at2"/>
<dbReference type="Proteomes" id="UP000000658">
    <property type="component" value="Chromosome"/>
</dbReference>
<dbReference type="GO" id="GO:0005524">
    <property type="term" value="F:ATP binding"/>
    <property type="evidence" value="ECO:0007669"/>
    <property type="project" value="UniProtKB-UniRule"/>
</dbReference>
<dbReference type="GO" id="GO:0004810">
    <property type="term" value="F:CCA tRNA nucleotidyltransferase activity"/>
    <property type="evidence" value="ECO:0007669"/>
    <property type="project" value="UniProtKB-UniRule"/>
</dbReference>
<dbReference type="GO" id="GO:0000287">
    <property type="term" value="F:magnesium ion binding"/>
    <property type="evidence" value="ECO:0007669"/>
    <property type="project" value="UniProtKB-UniRule"/>
</dbReference>
<dbReference type="GO" id="GO:0000049">
    <property type="term" value="F:tRNA binding"/>
    <property type="evidence" value="ECO:0007669"/>
    <property type="project" value="UniProtKB-UniRule"/>
</dbReference>
<dbReference type="GO" id="GO:0042245">
    <property type="term" value="P:RNA repair"/>
    <property type="evidence" value="ECO:0007669"/>
    <property type="project" value="UniProtKB-KW"/>
</dbReference>
<dbReference type="GO" id="GO:0001680">
    <property type="term" value="P:tRNA 3'-terminal CCA addition"/>
    <property type="evidence" value="ECO:0007669"/>
    <property type="project" value="UniProtKB-UniRule"/>
</dbReference>
<dbReference type="CDD" id="cd05398">
    <property type="entry name" value="NT_ClassII-CCAase"/>
    <property type="match status" value="1"/>
</dbReference>
<dbReference type="Gene3D" id="3.30.460.10">
    <property type="entry name" value="Beta Polymerase, domain 2"/>
    <property type="match status" value="1"/>
</dbReference>
<dbReference type="Gene3D" id="1.10.3090.10">
    <property type="entry name" value="cca-adding enzyme, domain 2"/>
    <property type="match status" value="1"/>
</dbReference>
<dbReference type="HAMAP" id="MF_01262">
    <property type="entry name" value="CCA_bact_type2"/>
    <property type="match status" value="1"/>
</dbReference>
<dbReference type="InterPro" id="IPR012006">
    <property type="entry name" value="CCA_bact"/>
</dbReference>
<dbReference type="InterPro" id="IPR043519">
    <property type="entry name" value="NT_sf"/>
</dbReference>
<dbReference type="InterPro" id="IPR002646">
    <property type="entry name" value="PolA_pol_head_dom"/>
</dbReference>
<dbReference type="InterPro" id="IPR032828">
    <property type="entry name" value="PolyA_RNA-bd"/>
</dbReference>
<dbReference type="InterPro" id="IPR050124">
    <property type="entry name" value="tRNA_CCA-adding_enzyme"/>
</dbReference>
<dbReference type="PANTHER" id="PTHR47545">
    <property type="entry name" value="MULTIFUNCTIONAL CCA PROTEIN"/>
    <property type="match status" value="1"/>
</dbReference>
<dbReference type="PANTHER" id="PTHR47545:SF1">
    <property type="entry name" value="MULTIFUNCTIONAL CCA PROTEIN"/>
    <property type="match status" value="1"/>
</dbReference>
<dbReference type="Pfam" id="PF01743">
    <property type="entry name" value="PolyA_pol"/>
    <property type="match status" value="1"/>
</dbReference>
<dbReference type="Pfam" id="PF12627">
    <property type="entry name" value="PolyA_pol_RNAbd"/>
    <property type="match status" value="1"/>
</dbReference>
<dbReference type="PIRSF" id="PIRSF000813">
    <property type="entry name" value="CCA_bact"/>
    <property type="match status" value="1"/>
</dbReference>
<dbReference type="SUPFAM" id="SSF81301">
    <property type="entry name" value="Nucleotidyltransferase"/>
    <property type="match status" value="1"/>
</dbReference>
<dbReference type="SUPFAM" id="SSF81891">
    <property type="entry name" value="Poly A polymerase C-terminal region-like"/>
    <property type="match status" value="1"/>
</dbReference>
<comment type="function">
    <text evidence="1">Catalyzes the addition and repair of the essential 3'-terminal CCA sequence in tRNAs without using a nucleic acid template. Adds these three nucleotides in the order of C, C, and A to the tRNA nucleotide-73, using CTP and ATP as substrates and producing inorganic pyrophosphate. tRNA 3'-terminal CCA addition is required both for tRNA processing and repair. Also involved in tRNA surveillance by mediating tandem CCA addition to generate a CCACCA at the 3' terminus of unstable tRNAs. While stable tRNAs receive only 3'-terminal CCA, unstable tRNAs are marked with CCACCA and rapidly degraded.</text>
</comment>
<comment type="catalytic activity">
    <reaction evidence="1">
        <text>a tRNA precursor + 2 CTP + ATP = a tRNA with a 3' CCA end + 3 diphosphate</text>
        <dbReference type="Rhea" id="RHEA:14433"/>
        <dbReference type="Rhea" id="RHEA-COMP:10465"/>
        <dbReference type="Rhea" id="RHEA-COMP:10468"/>
        <dbReference type="ChEBI" id="CHEBI:30616"/>
        <dbReference type="ChEBI" id="CHEBI:33019"/>
        <dbReference type="ChEBI" id="CHEBI:37563"/>
        <dbReference type="ChEBI" id="CHEBI:74896"/>
        <dbReference type="ChEBI" id="CHEBI:83071"/>
        <dbReference type="EC" id="2.7.7.72"/>
    </reaction>
</comment>
<comment type="catalytic activity">
    <reaction evidence="1">
        <text>a tRNA with a 3' CCA end + 2 CTP + ATP = a tRNA with a 3' CCACCA end + 3 diphosphate</text>
        <dbReference type="Rhea" id="RHEA:76235"/>
        <dbReference type="Rhea" id="RHEA-COMP:10468"/>
        <dbReference type="Rhea" id="RHEA-COMP:18655"/>
        <dbReference type="ChEBI" id="CHEBI:30616"/>
        <dbReference type="ChEBI" id="CHEBI:33019"/>
        <dbReference type="ChEBI" id="CHEBI:37563"/>
        <dbReference type="ChEBI" id="CHEBI:83071"/>
        <dbReference type="ChEBI" id="CHEBI:195187"/>
    </reaction>
    <physiologicalReaction direction="left-to-right" evidence="1">
        <dbReference type="Rhea" id="RHEA:76236"/>
    </physiologicalReaction>
</comment>
<comment type="cofactor">
    <cofactor evidence="1">
        <name>Mg(2+)</name>
        <dbReference type="ChEBI" id="CHEBI:18420"/>
    </cofactor>
</comment>
<comment type="miscellaneous">
    <text evidence="1">A single active site specifically recognizes both ATP and CTP and is responsible for their addition.</text>
</comment>
<comment type="similarity">
    <text evidence="1">Belongs to the tRNA nucleotidyltransferase/poly(A) polymerase family. Bacterial CCA-adding enzyme type 2 subfamily.</text>
</comment>
<proteinExistence type="inferred from homology"/>
<sequence length="375" mass="41817">MQIYKVGGAVRDRLLGRPVSDVDWLVVGATVEQMQAQGFRPVGADFPVFLHPKTGEEYALARTERKSGRGYGGFTFHASPDVTLEEDLIRRDLTINAMAEDEHGDLHDPYHGKTDLDQRILRHVSLAFAEDPLRVLRVARFAARYAPMGFRVADETLELMRQISASGELLALTAERSWKEIERALMEDQPQVFIEVLRACGALKELMPEVDALFHGEVSQGSHALDVLQQAAAQQQPLAVRWACLLLALGGKQIKTVNQRFKAPRECQELAILVGEFHEQGHRAMELAPEMLLDLLQKFDVYRRPQRFEEFIEACRMDALLGGRDYPQSEYLRGAAATARAVDVKPLMESGLTGQALGGALKAARLSALQAYKAR</sequence>
<name>CCA_PSEE4</name>
<gene>
    <name evidence="1" type="primary">cca</name>
    <name type="ordered locus">PSEEN0421</name>
</gene>
<evidence type="ECO:0000255" key="1">
    <source>
        <dbReference type="HAMAP-Rule" id="MF_01262"/>
    </source>
</evidence>
<feature type="chain" id="PRO_1000054319" description="CCA-adding enzyme">
    <location>
        <begin position="1"/>
        <end position="375"/>
    </location>
</feature>
<feature type="binding site" evidence="1">
    <location>
        <position position="8"/>
    </location>
    <ligand>
        <name>ATP</name>
        <dbReference type="ChEBI" id="CHEBI:30616"/>
    </ligand>
</feature>
<feature type="binding site" evidence="1">
    <location>
        <position position="8"/>
    </location>
    <ligand>
        <name>CTP</name>
        <dbReference type="ChEBI" id="CHEBI:37563"/>
    </ligand>
</feature>
<feature type="binding site" evidence="1">
    <location>
        <position position="11"/>
    </location>
    <ligand>
        <name>ATP</name>
        <dbReference type="ChEBI" id="CHEBI:30616"/>
    </ligand>
</feature>
<feature type="binding site" evidence="1">
    <location>
        <position position="11"/>
    </location>
    <ligand>
        <name>CTP</name>
        <dbReference type="ChEBI" id="CHEBI:37563"/>
    </ligand>
</feature>
<feature type="binding site" evidence="1">
    <location>
        <position position="21"/>
    </location>
    <ligand>
        <name>Mg(2+)</name>
        <dbReference type="ChEBI" id="CHEBI:18420"/>
    </ligand>
</feature>
<feature type="binding site" evidence="1">
    <location>
        <position position="23"/>
    </location>
    <ligand>
        <name>Mg(2+)</name>
        <dbReference type="ChEBI" id="CHEBI:18420"/>
    </ligand>
</feature>
<feature type="binding site" evidence="1">
    <location>
        <position position="91"/>
    </location>
    <ligand>
        <name>ATP</name>
        <dbReference type="ChEBI" id="CHEBI:30616"/>
    </ligand>
</feature>
<feature type="binding site" evidence="1">
    <location>
        <position position="91"/>
    </location>
    <ligand>
        <name>CTP</name>
        <dbReference type="ChEBI" id="CHEBI:37563"/>
    </ligand>
</feature>
<feature type="binding site" evidence="1">
    <location>
        <position position="137"/>
    </location>
    <ligand>
        <name>ATP</name>
        <dbReference type="ChEBI" id="CHEBI:30616"/>
    </ligand>
</feature>
<feature type="binding site" evidence="1">
    <location>
        <position position="137"/>
    </location>
    <ligand>
        <name>CTP</name>
        <dbReference type="ChEBI" id="CHEBI:37563"/>
    </ligand>
</feature>
<feature type="binding site" evidence="1">
    <location>
        <position position="140"/>
    </location>
    <ligand>
        <name>ATP</name>
        <dbReference type="ChEBI" id="CHEBI:30616"/>
    </ligand>
</feature>
<feature type="binding site" evidence="1">
    <location>
        <position position="140"/>
    </location>
    <ligand>
        <name>CTP</name>
        <dbReference type="ChEBI" id="CHEBI:37563"/>
    </ligand>
</feature>
<organism>
    <name type="scientific">Pseudomonas entomophila (strain L48)</name>
    <dbReference type="NCBI Taxonomy" id="384676"/>
    <lineage>
        <taxon>Bacteria</taxon>
        <taxon>Pseudomonadati</taxon>
        <taxon>Pseudomonadota</taxon>
        <taxon>Gammaproteobacteria</taxon>
        <taxon>Pseudomonadales</taxon>
        <taxon>Pseudomonadaceae</taxon>
        <taxon>Pseudomonas</taxon>
    </lineage>
</organism>
<protein>
    <recommendedName>
        <fullName evidence="1">CCA-adding enzyme</fullName>
        <ecNumber evidence="1">2.7.7.72</ecNumber>
    </recommendedName>
    <alternativeName>
        <fullName evidence="1">CCA tRNA nucleotidyltransferase</fullName>
    </alternativeName>
    <alternativeName>
        <fullName evidence="1">tRNA CCA-pyrophosphorylase</fullName>
    </alternativeName>
    <alternativeName>
        <fullName evidence="1">tRNA adenylyl-/cytidylyl- transferase</fullName>
    </alternativeName>
    <alternativeName>
        <fullName evidence="1">tRNA nucleotidyltransferase</fullName>
    </alternativeName>
    <alternativeName>
        <fullName evidence="1">tRNA-NT</fullName>
    </alternativeName>
</protein>
<keyword id="KW-0067">ATP-binding</keyword>
<keyword id="KW-0460">Magnesium</keyword>
<keyword id="KW-0479">Metal-binding</keyword>
<keyword id="KW-0547">Nucleotide-binding</keyword>
<keyword id="KW-0548">Nucleotidyltransferase</keyword>
<keyword id="KW-0692">RNA repair</keyword>
<keyword id="KW-0694">RNA-binding</keyword>
<keyword id="KW-0808">Transferase</keyword>
<keyword id="KW-0819">tRNA processing</keyword>
<reference key="1">
    <citation type="journal article" date="2006" name="Nat. Biotechnol.">
        <title>Complete genome sequence of the entomopathogenic and metabolically versatile soil bacterium Pseudomonas entomophila.</title>
        <authorList>
            <person name="Vodovar N."/>
            <person name="Vallenet D."/>
            <person name="Cruveiller S."/>
            <person name="Rouy Z."/>
            <person name="Barbe V."/>
            <person name="Acosta C."/>
            <person name="Cattolico L."/>
            <person name="Jubin C."/>
            <person name="Lajus A."/>
            <person name="Segurens B."/>
            <person name="Vacherie B."/>
            <person name="Wincker P."/>
            <person name="Weissenbach J."/>
            <person name="Lemaitre B."/>
            <person name="Medigue C."/>
            <person name="Boccard F."/>
        </authorList>
    </citation>
    <scope>NUCLEOTIDE SEQUENCE [LARGE SCALE GENOMIC DNA]</scope>
    <source>
        <strain>L48</strain>
    </source>
</reference>
<accession>Q1IG27</accession>